<proteinExistence type="inferred from homology"/>
<gene>
    <name type="ordered locus">KPN78578_09190</name>
    <name type="ORF">KPN_00944</name>
</gene>
<protein>
    <recommendedName>
        <fullName evidence="1">UPF0434 protein KPN78578_09190</fullName>
    </recommendedName>
</protein>
<sequence length="60" mass="6797">MDHRLLEIIACPVCNGKLYYSQDKQELICKLDSLAFPLRDGIPVLLETEARPLALEESHS</sequence>
<dbReference type="EMBL" id="CP000647">
    <property type="protein sequence ID" value="ABR76380.1"/>
    <property type="molecule type" value="Genomic_DNA"/>
</dbReference>
<dbReference type="SMR" id="A6T709"/>
<dbReference type="STRING" id="272620.KPN_00944"/>
<dbReference type="PaxDb" id="272620-KPN_00944"/>
<dbReference type="EnsemblBacteria" id="ABR76380">
    <property type="protein sequence ID" value="ABR76380"/>
    <property type="gene ID" value="KPN_00944"/>
</dbReference>
<dbReference type="KEGG" id="kpn:KPN_00944"/>
<dbReference type="HOGENOM" id="CLU_155659_3_1_6"/>
<dbReference type="Proteomes" id="UP000000265">
    <property type="component" value="Chromosome"/>
</dbReference>
<dbReference type="GO" id="GO:0005829">
    <property type="term" value="C:cytosol"/>
    <property type="evidence" value="ECO:0007669"/>
    <property type="project" value="TreeGrafter"/>
</dbReference>
<dbReference type="FunFam" id="2.20.25.10:FF:000002">
    <property type="entry name" value="UPF0434 protein YcaR"/>
    <property type="match status" value="1"/>
</dbReference>
<dbReference type="Gene3D" id="2.20.25.10">
    <property type="match status" value="1"/>
</dbReference>
<dbReference type="HAMAP" id="MF_01187">
    <property type="entry name" value="UPF0434"/>
    <property type="match status" value="1"/>
</dbReference>
<dbReference type="InterPro" id="IPR005651">
    <property type="entry name" value="Trm112-like"/>
</dbReference>
<dbReference type="NCBIfam" id="NF008806">
    <property type="entry name" value="PRK11827.1"/>
    <property type="match status" value="1"/>
</dbReference>
<dbReference type="PANTHER" id="PTHR33505:SF4">
    <property type="entry name" value="PROTEIN PREY, MITOCHONDRIAL"/>
    <property type="match status" value="1"/>
</dbReference>
<dbReference type="PANTHER" id="PTHR33505">
    <property type="entry name" value="ZGC:162634"/>
    <property type="match status" value="1"/>
</dbReference>
<dbReference type="Pfam" id="PF03966">
    <property type="entry name" value="Trm112p"/>
    <property type="match status" value="1"/>
</dbReference>
<dbReference type="SUPFAM" id="SSF158997">
    <property type="entry name" value="Trm112p-like"/>
    <property type="match status" value="1"/>
</dbReference>
<evidence type="ECO:0000255" key="1">
    <source>
        <dbReference type="HAMAP-Rule" id="MF_01187"/>
    </source>
</evidence>
<name>Y919_KLEP7</name>
<comment type="similarity">
    <text evidence="1">Belongs to the UPF0434 family.</text>
</comment>
<reference key="1">
    <citation type="submission" date="2006-09" db="EMBL/GenBank/DDBJ databases">
        <authorList>
            <consortium name="The Klebsiella pneumonia Genome Sequencing Project"/>
            <person name="McClelland M."/>
            <person name="Sanderson E.K."/>
            <person name="Spieth J."/>
            <person name="Clifton W.S."/>
            <person name="Latreille P."/>
            <person name="Sabo A."/>
            <person name="Pepin K."/>
            <person name="Bhonagiri V."/>
            <person name="Porwollik S."/>
            <person name="Ali J."/>
            <person name="Wilson R.K."/>
        </authorList>
    </citation>
    <scope>NUCLEOTIDE SEQUENCE [LARGE SCALE GENOMIC DNA]</scope>
    <source>
        <strain>ATCC 700721 / MGH 78578</strain>
    </source>
</reference>
<feature type="chain" id="PRO_1000065845" description="UPF0434 protein KPN78578_09190">
    <location>
        <begin position="1"/>
        <end position="60"/>
    </location>
</feature>
<accession>A6T709</accession>
<organism>
    <name type="scientific">Klebsiella pneumoniae subsp. pneumoniae (strain ATCC 700721 / MGH 78578)</name>
    <dbReference type="NCBI Taxonomy" id="272620"/>
    <lineage>
        <taxon>Bacteria</taxon>
        <taxon>Pseudomonadati</taxon>
        <taxon>Pseudomonadota</taxon>
        <taxon>Gammaproteobacteria</taxon>
        <taxon>Enterobacterales</taxon>
        <taxon>Enterobacteriaceae</taxon>
        <taxon>Klebsiella/Raoultella group</taxon>
        <taxon>Klebsiella</taxon>
        <taxon>Klebsiella pneumoniae complex</taxon>
    </lineage>
</organism>